<comment type="function">
    <text evidence="1">Involved in the third step of the chorismate pathway, which leads to the biosynthesis of aromatic amino acids. Catalyzes the cis-dehydration of 3-dehydroquinate (DHQ) and introduces the first double bond of the aromatic ring to yield 3-dehydroshikimate.</text>
</comment>
<comment type="catalytic activity">
    <reaction evidence="1">
        <text>3-dehydroquinate = 3-dehydroshikimate + H2O</text>
        <dbReference type="Rhea" id="RHEA:21096"/>
        <dbReference type="ChEBI" id="CHEBI:15377"/>
        <dbReference type="ChEBI" id="CHEBI:16630"/>
        <dbReference type="ChEBI" id="CHEBI:32364"/>
        <dbReference type="EC" id="4.2.1.10"/>
    </reaction>
</comment>
<comment type="pathway">
    <text evidence="1">Metabolic intermediate biosynthesis; chorismate biosynthesis; chorismate from D-erythrose 4-phosphate and phosphoenolpyruvate: step 3/7.</text>
</comment>
<comment type="subunit">
    <text evidence="1">Homodimer.</text>
</comment>
<comment type="similarity">
    <text evidence="1">Belongs to the type-I 3-dehydroquinase family.</text>
</comment>
<name>AROD_STRP7</name>
<feature type="chain" id="PRO_1000124787" description="3-dehydroquinate dehydratase">
    <location>
        <begin position="1"/>
        <end position="225"/>
    </location>
</feature>
<feature type="active site" description="Proton donor/acceptor" evidence="1">
    <location>
        <position position="118"/>
    </location>
</feature>
<feature type="active site" description="Schiff-base intermediate with substrate" evidence="1">
    <location>
        <position position="143"/>
    </location>
</feature>
<feature type="binding site" evidence="1">
    <location>
        <position position="6"/>
    </location>
    <ligand>
        <name>3-dehydroquinate</name>
        <dbReference type="ChEBI" id="CHEBI:32364"/>
    </ligand>
</feature>
<feature type="binding site" evidence="1">
    <location>
        <begin position="30"/>
        <end position="32"/>
    </location>
    <ligand>
        <name>3-dehydroquinate</name>
        <dbReference type="ChEBI" id="CHEBI:32364"/>
    </ligand>
</feature>
<feature type="binding site" evidence="1">
    <location>
        <position position="62"/>
    </location>
    <ligand>
        <name>3-dehydroquinate</name>
        <dbReference type="ChEBI" id="CHEBI:32364"/>
    </ligand>
</feature>
<feature type="binding site" evidence="1">
    <location>
        <position position="186"/>
    </location>
    <ligand>
        <name>3-dehydroquinate</name>
        <dbReference type="ChEBI" id="CHEBI:32364"/>
    </ligand>
</feature>
<feature type="binding site" evidence="1">
    <location>
        <position position="205"/>
    </location>
    <ligand>
        <name>3-dehydroquinate</name>
        <dbReference type="ChEBI" id="CHEBI:32364"/>
    </ligand>
</feature>
<feature type="binding site" evidence="1">
    <location>
        <position position="209"/>
    </location>
    <ligand>
        <name>3-dehydroquinate</name>
        <dbReference type="ChEBI" id="CHEBI:32364"/>
    </ligand>
</feature>
<keyword id="KW-0028">Amino-acid biosynthesis</keyword>
<keyword id="KW-0057">Aromatic amino acid biosynthesis</keyword>
<keyword id="KW-0456">Lyase</keyword>
<keyword id="KW-0704">Schiff base</keyword>
<organism>
    <name type="scientific">Streptococcus pneumoniae (strain 70585)</name>
    <dbReference type="NCBI Taxonomy" id="488221"/>
    <lineage>
        <taxon>Bacteria</taxon>
        <taxon>Bacillati</taxon>
        <taxon>Bacillota</taxon>
        <taxon>Bacilli</taxon>
        <taxon>Lactobacillales</taxon>
        <taxon>Streptococcaceae</taxon>
        <taxon>Streptococcus</taxon>
    </lineage>
</organism>
<evidence type="ECO:0000255" key="1">
    <source>
        <dbReference type="HAMAP-Rule" id="MF_00214"/>
    </source>
</evidence>
<gene>
    <name evidence="1" type="primary">aroD</name>
    <name type="ordered locus">SP70585_1416</name>
</gene>
<proteinExistence type="inferred from homology"/>
<sequence length="225" mass="25719">MKLIVSVMPRSLEEAQALDATRYLDADIIEWRADYLPKEAILQVAPAIFEKFAGRELVFTLRTRSEGGEIDLSPEEYIHLIKEVAQLYQPDYIDFEYYSYKDVFEEMLDFPNLVLSYHNFQETPENMMEILSELTILNPKLVKVAVMAHTEQDVLDLMNYTRGFKTLNPEQEYVTISMGKVGKVSRITADVTGSSWSFASLDEVSAPGQISLASMKKIREILDEA</sequence>
<reference key="1">
    <citation type="journal article" date="2010" name="Genome Biol.">
        <title>Structure and dynamics of the pan-genome of Streptococcus pneumoniae and closely related species.</title>
        <authorList>
            <person name="Donati C."/>
            <person name="Hiller N.L."/>
            <person name="Tettelin H."/>
            <person name="Muzzi A."/>
            <person name="Croucher N.J."/>
            <person name="Angiuoli S.V."/>
            <person name="Oggioni M."/>
            <person name="Dunning Hotopp J.C."/>
            <person name="Hu F.Z."/>
            <person name="Riley D.R."/>
            <person name="Covacci A."/>
            <person name="Mitchell T.J."/>
            <person name="Bentley S.D."/>
            <person name="Kilian M."/>
            <person name="Ehrlich G.D."/>
            <person name="Rappuoli R."/>
            <person name="Moxon E.R."/>
            <person name="Masignani V."/>
        </authorList>
    </citation>
    <scope>NUCLEOTIDE SEQUENCE [LARGE SCALE GENOMIC DNA]</scope>
    <source>
        <strain>70585</strain>
    </source>
</reference>
<protein>
    <recommendedName>
        <fullName evidence="1">3-dehydroquinate dehydratase</fullName>
        <shortName evidence="1">3-dehydroquinase</shortName>
        <ecNumber evidence="1">4.2.1.10</ecNumber>
    </recommendedName>
    <alternativeName>
        <fullName evidence="1">Type I DHQase</fullName>
    </alternativeName>
    <alternativeName>
        <fullName evidence="1">Type I dehydroquinase</fullName>
        <shortName evidence="1">DHQ1</shortName>
    </alternativeName>
</protein>
<dbReference type="EC" id="4.2.1.10" evidence="1"/>
<dbReference type="EMBL" id="CP000918">
    <property type="protein sequence ID" value="ACO16007.1"/>
    <property type="molecule type" value="Genomic_DNA"/>
</dbReference>
<dbReference type="RefSeq" id="WP_000767762.1">
    <property type="nucleotide sequence ID" value="NC_012468.1"/>
</dbReference>
<dbReference type="SMR" id="C1C7X8"/>
<dbReference type="GeneID" id="45653363"/>
<dbReference type="KEGG" id="snm:SP70585_1416"/>
<dbReference type="HOGENOM" id="CLU_064444_0_0_9"/>
<dbReference type="UniPathway" id="UPA00053">
    <property type="reaction ID" value="UER00086"/>
</dbReference>
<dbReference type="Proteomes" id="UP000002211">
    <property type="component" value="Chromosome"/>
</dbReference>
<dbReference type="GO" id="GO:0003855">
    <property type="term" value="F:3-dehydroquinate dehydratase activity"/>
    <property type="evidence" value="ECO:0007669"/>
    <property type="project" value="UniProtKB-UniRule"/>
</dbReference>
<dbReference type="GO" id="GO:0046279">
    <property type="term" value="P:3,4-dihydroxybenzoate biosynthetic process"/>
    <property type="evidence" value="ECO:0007669"/>
    <property type="project" value="UniProtKB-ARBA"/>
</dbReference>
<dbReference type="GO" id="GO:0008652">
    <property type="term" value="P:amino acid biosynthetic process"/>
    <property type="evidence" value="ECO:0007669"/>
    <property type="project" value="UniProtKB-KW"/>
</dbReference>
<dbReference type="GO" id="GO:0009073">
    <property type="term" value="P:aromatic amino acid family biosynthetic process"/>
    <property type="evidence" value="ECO:0007669"/>
    <property type="project" value="UniProtKB-KW"/>
</dbReference>
<dbReference type="GO" id="GO:0009423">
    <property type="term" value="P:chorismate biosynthetic process"/>
    <property type="evidence" value="ECO:0007669"/>
    <property type="project" value="UniProtKB-UniRule"/>
</dbReference>
<dbReference type="CDD" id="cd00502">
    <property type="entry name" value="DHQase_I"/>
    <property type="match status" value="1"/>
</dbReference>
<dbReference type="FunFam" id="3.20.20.70:FF:000217">
    <property type="entry name" value="3-dehydroquinate dehydratase"/>
    <property type="match status" value="1"/>
</dbReference>
<dbReference type="Gene3D" id="3.20.20.70">
    <property type="entry name" value="Aldolase class I"/>
    <property type="match status" value="1"/>
</dbReference>
<dbReference type="HAMAP" id="MF_00214">
    <property type="entry name" value="AroD"/>
    <property type="match status" value="1"/>
</dbReference>
<dbReference type="InterPro" id="IPR013785">
    <property type="entry name" value="Aldolase_TIM"/>
</dbReference>
<dbReference type="InterPro" id="IPR001381">
    <property type="entry name" value="DHquinase_I"/>
</dbReference>
<dbReference type="InterPro" id="IPR050146">
    <property type="entry name" value="Type-I_3-dehydroquinase"/>
</dbReference>
<dbReference type="NCBIfam" id="TIGR01093">
    <property type="entry name" value="aroD"/>
    <property type="match status" value="1"/>
</dbReference>
<dbReference type="PANTHER" id="PTHR43699">
    <property type="entry name" value="3-DEHYDROQUINATE DEHYDRATASE"/>
    <property type="match status" value="1"/>
</dbReference>
<dbReference type="PANTHER" id="PTHR43699:SF1">
    <property type="entry name" value="3-DEHYDROQUINATE DEHYDRATASE"/>
    <property type="match status" value="1"/>
</dbReference>
<dbReference type="Pfam" id="PF01487">
    <property type="entry name" value="DHquinase_I"/>
    <property type="match status" value="1"/>
</dbReference>
<dbReference type="SUPFAM" id="SSF51569">
    <property type="entry name" value="Aldolase"/>
    <property type="match status" value="1"/>
</dbReference>
<accession>C1C7X8</accession>